<protein>
    <recommendedName>
        <fullName evidence="1">Crossover junction endodeoxyribonuclease RuvC</fullName>
        <ecNumber evidence="1">3.1.21.10</ecNumber>
    </recommendedName>
    <alternativeName>
        <fullName evidence="1">Holliday junction nuclease RuvC</fullName>
    </alternativeName>
    <alternativeName>
        <fullName evidence="1">Holliday junction resolvase RuvC</fullName>
    </alternativeName>
</protein>
<comment type="function">
    <text evidence="1">The RuvA-RuvB-RuvC complex processes Holliday junction (HJ) DNA during genetic recombination and DNA repair. Endonuclease that resolves HJ intermediates. Cleaves cruciform DNA by making single-stranded nicks across the HJ at symmetrical positions within the homologous arms, yielding a 5'-phosphate and a 3'-hydroxyl group; requires a central core of homology in the junction. The consensus cleavage sequence is 5'-(A/T)TT(C/G)-3'. Cleavage occurs on the 3'-side of the TT dinucleotide at the point of strand exchange. HJ branch migration catalyzed by RuvA-RuvB allows RuvC to scan DNA until it finds its consensus sequence, where it cleaves and resolves the cruciform DNA.</text>
</comment>
<comment type="catalytic activity">
    <reaction evidence="1">
        <text>Endonucleolytic cleavage at a junction such as a reciprocal single-stranded crossover between two homologous DNA duplexes (Holliday junction).</text>
        <dbReference type="EC" id="3.1.21.10"/>
    </reaction>
</comment>
<comment type="cofactor">
    <cofactor evidence="1">
        <name>Mg(2+)</name>
        <dbReference type="ChEBI" id="CHEBI:18420"/>
    </cofactor>
    <text evidence="1">Binds 2 Mg(2+) ion per subunit.</text>
</comment>
<comment type="subunit">
    <text evidence="1">Homodimer which binds Holliday junction (HJ) DNA. The HJ becomes 2-fold symmetrical on binding to RuvC with unstacked arms; it has a different conformation from HJ DNA in complex with RuvA. In the full resolvosome a probable DNA-RuvA(4)-RuvB(12)-RuvC(2) complex forms which resolves the HJ.</text>
</comment>
<comment type="subcellular location">
    <subcellularLocation>
        <location evidence="1">Cytoplasm</location>
    </subcellularLocation>
</comment>
<comment type="similarity">
    <text evidence="1">Belongs to the RuvC family.</text>
</comment>
<dbReference type="EC" id="3.1.21.10" evidence="1"/>
<dbReference type="EMBL" id="CP001233">
    <property type="protein sequence ID" value="ACP06076.1"/>
    <property type="molecule type" value="Genomic_DNA"/>
</dbReference>
<dbReference type="RefSeq" id="WP_000111361.1">
    <property type="nucleotide sequence ID" value="NC_012578.1"/>
</dbReference>
<dbReference type="SMR" id="C3LNF0"/>
<dbReference type="KEGG" id="vcm:VCM66_1770"/>
<dbReference type="HOGENOM" id="CLU_091257_2_1_6"/>
<dbReference type="Proteomes" id="UP000001217">
    <property type="component" value="Chromosome I"/>
</dbReference>
<dbReference type="GO" id="GO:0005737">
    <property type="term" value="C:cytoplasm"/>
    <property type="evidence" value="ECO:0007669"/>
    <property type="project" value="UniProtKB-SubCell"/>
</dbReference>
<dbReference type="GO" id="GO:0048476">
    <property type="term" value="C:Holliday junction resolvase complex"/>
    <property type="evidence" value="ECO:0007669"/>
    <property type="project" value="UniProtKB-UniRule"/>
</dbReference>
<dbReference type="GO" id="GO:0008821">
    <property type="term" value="F:crossover junction DNA endonuclease activity"/>
    <property type="evidence" value="ECO:0007669"/>
    <property type="project" value="UniProtKB-UniRule"/>
</dbReference>
<dbReference type="GO" id="GO:0003677">
    <property type="term" value="F:DNA binding"/>
    <property type="evidence" value="ECO:0007669"/>
    <property type="project" value="UniProtKB-KW"/>
</dbReference>
<dbReference type="GO" id="GO:0000287">
    <property type="term" value="F:magnesium ion binding"/>
    <property type="evidence" value="ECO:0007669"/>
    <property type="project" value="UniProtKB-UniRule"/>
</dbReference>
<dbReference type="GO" id="GO:0006310">
    <property type="term" value="P:DNA recombination"/>
    <property type="evidence" value="ECO:0007669"/>
    <property type="project" value="UniProtKB-UniRule"/>
</dbReference>
<dbReference type="GO" id="GO:0006281">
    <property type="term" value="P:DNA repair"/>
    <property type="evidence" value="ECO:0007669"/>
    <property type="project" value="UniProtKB-UniRule"/>
</dbReference>
<dbReference type="CDD" id="cd16962">
    <property type="entry name" value="RuvC"/>
    <property type="match status" value="1"/>
</dbReference>
<dbReference type="FunFam" id="3.30.420.10:FF:000002">
    <property type="entry name" value="Crossover junction endodeoxyribonuclease RuvC"/>
    <property type="match status" value="1"/>
</dbReference>
<dbReference type="Gene3D" id="3.30.420.10">
    <property type="entry name" value="Ribonuclease H-like superfamily/Ribonuclease H"/>
    <property type="match status" value="1"/>
</dbReference>
<dbReference type="HAMAP" id="MF_00034">
    <property type="entry name" value="RuvC"/>
    <property type="match status" value="1"/>
</dbReference>
<dbReference type="InterPro" id="IPR012337">
    <property type="entry name" value="RNaseH-like_sf"/>
</dbReference>
<dbReference type="InterPro" id="IPR036397">
    <property type="entry name" value="RNaseH_sf"/>
</dbReference>
<dbReference type="InterPro" id="IPR020563">
    <property type="entry name" value="X-over_junc_endoDNase_Mg_BS"/>
</dbReference>
<dbReference type="InterPro" id="IPR002176">
    <property type="entry name" value="X-over_junc_endoDNase_RuvC"/>
</dbReference>
<dbReference type="NCBIfam" id="TIGR00228">
    <property type="entry name" value="ruvC"/>
    <property type="match status" value="1"/>
</dbReference>
<dbReference type="PANTHER" id="PTHR30194">
    <property type="entry name" value="CROSSOVER JUNCTION ENDODEOXYRIBONUCLEASE RUVC"/>
    <property type="match status" value="1"/>
</dbReference>
<dbReference type="PANTHER" id="PTHR30194:SF3">
    <property type="entry name" value="CROSSOVER JUNCTION ENDODEOXYRIBONUCLEASE RUVC"/>
    <property type="match status" value="1"/>
</dbReference>
<dbReference type="Pfam" id="PF02075">
    <property type="entry name" value="RuvC"/>
    <property type="match status" value="1"/>
</dbReference>
<dbReference type="PRINTS" id="PR00696">
    <property type="entry name" value="RSOLVASERUVC"/>
</dbReference>
<dbReference type="SUPFAM" id="SSF53098">
    <property type="entry name" value="Ribonuclease H-like"/>
    <property type="match status" value="1"/>
</dbReference>
<dbReference type="PROSITE" id="PS01321">
    <property type="entry name" value="RUVC"/>
    <property type="match status" value="1"/>
</dbReference>
<name>RUVC_VIBCM</name>
<feature type="chain" id="PRO_1000195276" description="Crossover junction endodeoxyribonuclease RuvC">
    <location>
        <begin position="1"/>
        <end position="173"/>
    </location>
</feature>
<feature type="active site" evidence="1">
    <location>
        <position position="8"/>
    </location>
</feature>
<feature type="active site" evidence="1">
    <location>
        <position position="67"/>
    </location>
</feature>
<feature type="active site" evidence="1">
    <location>
        <position position="139"/>
    </location>
</feature>
<feature type="binding site" evidence="1">
    <location>
        <position position="8"/>
    </location>
    <ligand>
        <name>Mg(2+)</name>
        <dbReference type="ChEBI" id="CHEBI:18420"/>
        <label>1</label>
    </ligand>
</feature>
<feature type="binding site" evidence="1">
    <location>
        <position position="67"/>
    </location>
    <ligand>
        <name>Mg(2+)</name>
        <dbReference type="ChEBI" id="CHEBI:18420"/>
        <label>2</label>
    </ligand>
</feature>
<feature type="binding site" evidence="1">
    <location>
        <position position="139"/>
    </location>
    <ligand>
        <name>Mg(2+)</name>
        <dbReference type="ChEBI" id="CHEBI:18420"/>
        <label>1</label>
    </ligand>
</feature>
<gene>
    <name evidence="1" type="primary">ruvC</name>
    <name type="ordered locus">VCM66_1770</name>
</gene>
<organism>
    <name type="scientific">Vibrio cholerae serotype O1 (strain M66-2)</name>
    <dbReference type="NCBI Taxonomy" id="579112"/>
    <lineage>
        <taxon>Bacteria</taxon>
        <taxon>Pseudomonadati</taxon>
        <taxon>Pseudomonadota</taxon>
        <taxon>Gammaproteobacteria</taxon>
        <taxon>Vibrionales</taxon>
        <taxon>Vibrionaceae</taxon>
        <taxon>Vibrio</taxon>
    </lineage>
</organism>
<accession>C3LNF0</accession>
<proteinExistence type="inferred from homology"/>
<evidence type="ECO:0000255" key="1">
    <source>
        <dbReference type="HAMAP-Rule" id="MF_00034"/>
    </source>
</evidence>
<reference key="1">
    <citation type="journal article" date="2008" name="PLoS ONE">
        <title>A recalibrated molecular clock and independent origins for the cholera pandemic clones.</title>
        <authorList>
            <person name="Feng L."/>
            <person name="Reeves P.R."/>
            <person name="Lan R."/>
            <person name="Ren Y."/>
            <person name="Gao C."/>
            <person name="Zhou Z."/>
            <person name="Ren Y."/>
            <person name="Cheng J."/>
            <person name="Wang W."/>
            <person name="Wang J."/>
            <person name="Qian W."/>
            <person name="Li D."/>
            <person name="Wang L."/>
        </authorList>
    </citation>
    <scope>NUCLEOTIDE SEQUENCE [LARGE SCALE GENOMIC DNA]</scope>
    <source>
        <strain>M66-2</strain>
    </source>
</reference>
<keyword id="KW-0963">Cytoplasm</keyword>
<keyword id="KW-0227">DNA damage</keyword>
<keyword id="KW-0233">DNA recombination</keyword>
<keyword id="KW-0234">DNA repair</keyword>
<keyword id="KW-0238">DNA-binding</keyword>
<keyword id="KW-0255">Endonuclease</keyword>
<keyword id="KW-0378">Hydrolase</keyword>
<keyword id="KW-0460">Magnesium</keyword>
<keyword id="KW-0479">Metal-binding</keyword>
<keyword id="KW-0540">Nuclease</keyword>
<sequence>MSVILGIDPGSRVTGYGVIRQQGRHLIYLGSGCIRTSDLELPLRLKQIYAGVSEIITQFQPDAFAIEQVFMAKNADSALKLGQARGSAIVAAVNAELPVYEYAARLIKQAVVGTGAADKSQVQHMVQQMLKLPGKPQADAADALGVAICHANTNKTLIALAGQATSARRGRYR</sequence>